<protein>
    <recommendedName>
        <fullName evidence="1">NAD(P)H dehydrogenase (quinone)</fullName>
        <ecNumber evidence="1">1.6.5.2</ecNumber>
    </recommendedName>
    <alternativeName>
        <fullName>Flavoprotein WrbA</fullName>
    </alternativeName>
    <alternativeName>
        <fullName evidence="1">NAD(P)H:quinone oxidoreductase</fullName>
        <shortName evidence="1">NQO</shortName>
    </alternativeName>
</protein>
<proteinExistence type="inferred from homology"/>
<dbReference type="EC" id="1.6.5.2" evidence="1"/>
<dbReference type="EMBL" id="BX571865">
    <property type="protein sequence ID" value="CAE14257.1"/>
    <property type="molecule type" value="Genomic_DNA"/>
</dbReference>
<dbReference type="RefSeq" id="WP_011146225.1">
    <property type="nucleotide sequence ID" value="NC_005126.1"/>
</dbReference>
<dbReference type="SMR" id="Q7N5I5"/>
<dbReference type="STRING" id="243265.plu1964"/>
<dbReference type="CAZy" id="AA6">
    <property type="family name" value="Auxiliary Activities 6"/>
</dbReference>
<dbReference type="GeneID" id="48848237"/>
<dbReference type="KEGG" id="plu:plu1964"/>
<dbReference type="eggNOG" id="COG0655">
    <property type="taxonomic scope" value="Bacteria"/>
</dbReference>
<dbReference type="HOGENOM" id="CLU_051402_0_2_6"/>
<dbReference type="OrthoDB" id="9801479at2"/>
<dbReference type="Proteomes" id="UP000002514">
    <property type="component" value="Chromosome"/>
</dbReference>
<dbReference type="GO" id="GO:0016020">
    <property type="term" value="C:membrane"/>
    <property type="evidence" value="ECO:0007669"/>
    <property type="project" value="TreeGrafter"/>
</dbReference>
<dbReference type="GO" id="GO:0050660">
    <property type="term" value="F:flavin adenine dinucleotide binding"/>
    <property type="evidence" value="ECO:0007669"/>
    <property type="project" value="UniProtKB-UniRule"/>
</dbReference>
<dbReference type="GO" id="GO:0010181">
    <property type="term" value="F:FMN binding"/>
    <property type="evidence" value="ECO:0007669"/>
    <property type="project" value="InterPro"/>
</dbReference>
<dbReference type="GO" id="GO:0051287">
    <property type="term" value="F:NAD binding"/>
    <property type="evidence" value="ECO:0007669"/>
    <property type="project" value="UniProtKB-UniRule"/>
</dbReference>
<dbReference type="GO" id="GO:0050136">
    <property type="term" value="F:NADH:ubiquinone reductase (non-electrogenic) activity"/>
    <property type="evidence" value="ECO:0007669"/>
    <property type="project" value="RHEA"/>
</dbReference>
<dbReference type="GO" id="GO:0050661">
    <property type="term" value="F:NADP binding"/>
    <property type="evidence" value="ECO:0007669"/>
    <property type="project" value="UniProtKB-UniRule"/>
</dbReference>
<dbReference type="GO" id="GO:0008753">
    <property type="term" value="F:NADPH dehydrogenase (quinone) activity"/>
    <property type="evidence" value="ECO:0007669"/>
    <property type="project" value="RHEA"/>
</dbReference>
<dbReference type="FunFam" id="3.40.50.360:FF:000001">
    <property type="entry name" value="NAD(P)H dehydrogenase (Quinone) FQR1-like"/>
    <property type="match status" value="1"/>
</dbReference>
<dbReference type="Gene3D" id="3.40.50.360">
    <property type="match status" value="1"/>
</dbReference>
<dbReference type="HAMAP" id="MF_01017">
    <property type="entry name" value="NQOR"/>
    <property type="match status" value="1"/>
</dbReference>
<dbReference type="InterPro" id="IPR008254">
    <property type="entry name" value="Flavodoxin/NO_synth"/>
</dbReference>
<dbReference type="InterPro" id="IPR029039">
    <property type="entry name" value="Flavoprotein-like_sf"/>
</dbReference>
<dbReference type="InterPro" id="IPR010089">
    <property type="entry name" value="Flavoprotein_WrbA-like"/>
</dbReference>
<dbReference type="InterPro" id="IPR005025">
    <property type="entry name" value="FMN_Rdtase-like_dom"/>
</dbReference>
<dbReference type="InterPro" id="IPR037513">
    <property type="entry name" value="NQO"/>
</dbReference>
<dbReference type="NCBIfam" id="TIGR01755">
    <property type="entry name" value="flav_wrbA"/>
    <property type="match status" value="1"/>
</dbReference>
<dbReference type="NCBIfam" id="NF002999">
    <property type="entry name" value="PRK03767.1"/>
    <property type="match status" value="1"/>
</dbReference>
<dbReference type="PANTHER" id="PTHR30546">
    <property type="entry name" value="FLAVODOXIN-RELATED PROTEIN WRBA-RELATED"/>
    <property type="match status" value="1"/>
</dbReference>
<dbReference type="PANTHER" id="PTHR30546:SF23">
    <property type="entry name" value="FLAVOPROTEIN-LIKE PROTEIN YCP4-RELATED"/>
    <property type="match status" value="1"/>
</dbReference>
<dbReference type="Pfam" id="PF03358">
    <property type="entry name" value="FMN_red"/>
    <property type="match status" value="1"/>
</dbReference>
<dbReference type="SUPFAM" id="SSF52218">
    <property type="entry name" value="Flavoproteins"/>
    <property type="match status" value="1"/>
</dbReference>
<dbReference type="PROSITE" id="PS50902">
    <property type="entry name" value="FLAVODOXIN_LIKE"/>
    <property type="match status" value="1"/>
</dbReference>
<keyword id="KW-0285">Flavoprotein</keyword>
<keyword id="KW-0288">FMN</keyword>
<keyword id="KW-0520">NAD</keyword>
<keyword id="KW-0521">NADP</keyword>
<keyword id="KW-0547">Nucleotide-binding</keyword>
<keyword id="KW-0560">Oxidoreductase</keyword>
<keyword id="KW-1185">Reference proteome</keyword>
<organism>
    <name type="scientific">Photorhabdus laumondii subsp. laumondii (strain DSM 15139 / CIP 105565 / TT01)</name>
    <name type="common">Photorhabdus luminescens subsp. laumondii</name>
    <dbReference type="NCBI Taxonomy" id="243265"/>
    <lineage>
        <taxon>Bacteria</taxon>
        <taxon>Pseudomonadati</taxon>
        <taxon>Pseudomonadota</taxon>
        <taxon>Gammaproteobacteria</taxon>
        <taxon>Enterobacterales</taxon>
        <taxon>Morganellaceae</taxon>
        <taxon>Photorhabdus</taxon>
    </lineage>
</organism>
<sequence length="199" mass="21147">MTKILVLYYSMYGHIEALASAVAEGAKKVADVEVTIKRVPETIPPEAFTKAGGKVDQSAPVASVQELVDYDAIIIGTPTRFGNMAGQMRNFLDQTGGLWAEGKLYGKVASVFTSTGVGGGQEMTITSTWTTLAHHGFIIVPIGYGIPEIGDISQMQGGTPYGASTIADGDGSRIPNENELKIARYQGEHVAKIAKKLKD</sequence>
<comment type="catalytic activity">
    <reaction evidence="1">
        <text>a quinone + NADH + H(+) = a quinol + NAD(+)</text>
        <dbReference type="Rhea" id="RHEA:46160"/>
        <dbReference type="ChEBI" id="CHEBI:15378"/>
        <dbReference type="ChEBI" id="CHEBI:24646"/>
        <dbReference type="ChEBI" id="CHEBI:57540"/>
        <dbReference type="ChEBI" id="CHEBI:57945"/>
        <dbReference type="ChEBI" id="CHEBI:132124"/>
        <dbReference type="EC" id="1.6.5.2"/>
    </reaction>
</comment>
<comment type="catalytic activity">
    <reaction evidence="1">
        <text>a quinone + NADPH + H(+) = a quinol + NADP(+)</text>
        <dbReference type="Rhea" id="RHEA:46164"/>
        <dbReference type="ChEBI" id="CHEBI:15378"/>
        <dbReference type="ChEBI" id="CHEBI:24646"/>
        <dbReference type="ChEBI" id="CHEBI:57783"/>
        <dbReference type="ChEBI" id="CHEBI:58349"/>
        <dbReference type="ChEBI" id="CHEBI:132124"/>
        <dbReference type="EC" id="1.6.5.2"/>
    </reaction>
</comment>
<comment type="cofactor">
    <cofactor evidence="1">
        <name>FMN</name>
        <dbReference type="ChEBI" id="CHEBI:58210"/>
    </cofactor>
    <text evidence="1">Binds 1 FMN per monomer.</text>
</comment>
<comment type="similarity">
    <text evidence="1">Belongs to the WrbA family.</text>
</comment>
<accession>Q7N5I5</accession>
<evidence type="ECO:0000255" key="1">
    <source>
        <dbReference type="HAMAP-Rule" id="MF_01017"/>
    </source>
</evidence>
<name>NQOR_PHOLL</name>
<reference key="1">
    <citation type="journal article" date="2003" name="Nat. Biotechnol.">
        <title>The genome sequence of the entomopathogenic bacterium Photorhabdus luminescens.</title>
        <authorList>
            <person name="Duchaud E."/>
            <person name="Rusniok C."/>
            <person name="Frangeul L."/>
            <person name="Buchrieser C."/>
            <person name="Givaudan A."/>
            <person name="Taourit S."/>
            <person name="Bocs S."/>
            <person name="Boursaux-Eude C."/>
            <person name="Chandler M."/>
            <person name="Charles J.-F."/>
            <person name="Dassa E."/>
            <person name="Derose R."/>
            <person name="Derzelle S."/>
            <person name="Freyssinet G."/>
            <person name="Gaudriault S."/>
            <person name="Medigue C."/>
            <person name="Lanois A."/>
            <person name="Powell K."/>
            <person name="Siguier P."/>
            <person name="Vincent R."/>
            <person name="Wingate V."/>
            <person name="Zouine M."/>
            <person name="Glaser P."/>
            <person name="Boemare N."/>
            <person name="Danchin A."/>
            <person name="Kunst F."/>
        </authorList>
    </citation>
    <scope>NUCLEOTIDE SEQUENCE [LARGE SCALE GENOMIC DNA]</scope>
    <source>
        <strain>DSM 15139 / CIP 105565 / TT01</strain>
    </source>
</reference>
<feature type="chain" id="PRO_0000200750" description="NAD(P)H dehydrogenase (quinone)">
    <location>
        <begin position="1"/>
        <end position="199"/>
    </location>
</feature>
<feature type="domain" description="Flavodoxin-like" evidence="1">
    <location>
        <begin position="4"/>
        <end position="190"/>
    </location>
</feature>
<feature type="binding site" evidence="1">
    <location>
        <begin position="10"/>
        <end position="15"/>
    </location>
    <ligand>
        <name>FMN</name>
        <dbReference type="ChEBI" id="CHEBI:58210"/>
    </ligand>
</feature>
<feature type="binding site" evidence="1">
    <location>
        <position position="12"/>
    </location>
    <ligand>
        <name>NAD(+)</name>
        <dbReference type="ChEBI" id="CHEBI:57540"/>
    </ligand>
</feature>
<feature type="binding site" evidence="1">
    <location>
        <begin position="79"/>
        <end position="81"/>
    </location>
    <ligand>
        <name>FMN</name>
        <dbReference type="ChEBI" id="CHEBI:58210"/>
    </ligand>
</feature>
<feature type="binding site" evidence="1">
    <location>
        <position position="99"/>
    </location>
    <ligand>
        <name>substrate</name>
    </ligand>
</feature>
<feature type="binding site" evidence="1">
    <location>
        <position position="134"/>
    </location>
    <ligand>
        <name>FMN</name>
        <dbReference type="ChEBI" id="CHEBI:58210"/>
    </ligand>
</feature>
<gene>
    <name type="ordered locus">plu1964</name>
</gene>